<comment type="function">
    <text evidence="1">O-methyltransferase that catalyzes the 2 O-methylation steps in the ubiquinone biosynthetic pathway.</text>
</comment>
<comment type="catalytic activity">
    <reaction evidence="1">
        <text>a 3-demethylubiquinol + S-adenosyl-L-methionine = a ubiquinol + S-adenosyl-L-homocysteine + H(+)</text>
        <dbReference type="Rhea" id="RHEA:44380"/>
        <dbReference type="Rhea" id="RHEA-COMP:9566"/>
        <dbReference type="Rhea" id="RHEA-COMP:10914"/>
        <dbReference type="ChEBI" id="CHEBI:15378"/>
        <dbReference type="ChEBI" id="CHEBI:17976"/>
        <dbReference type="ChEBI" id="CHEBI:57856"/>
        <dbReference type="ChEBI" id="CHEBI:59789"/>
        <dbReference type="ChEBI" id="CHEBI:84422"/>
        <dbReference type="EC" id="2.1.1.64"/>
    </reaction>
</comment>
<comment type="catalytic activity">
    <reaction evidence="1">
        <text>a 3-(all-trans-polyprenyl)benzene-1,2-diol + S-adenosyl-L-methionine = a 2-methoxy-6-(all-trans-polyprenyl)phenol + S-adenosyl-L-homocysteine + H(+)</text>
        <dbReference type="Rhea" id="RHEA:31411"/>
        <dbReference type="Rhea" id="RHEA-COMP:9550"/>
        <dbReference type="Rhea" id="RHEA-COMP:9551"/>
        <dbReference type="ChEBI" id="CHEBI:15378"/>
        <dbReference type="ChEBI" id="CHEBI:57856"/>
        <dbReference type="ChEBI" id="CHEBI:59789"/>
        <dbReference type="ChEBI" id="CHEBI:62729"/>
        <dbReference type="ChEBI" id="CHEBI:62731"/>
        <dbReference type="EC" id="2.1.1.222"/>
    </reaction>
</comment>
<comment type="pathway">
    <text evidence="1">Cofactor biosynthesis; ubiquinone biosynthesis.</text>
</comment>
<comment type="similarity">
    <text evidence="1">Belongs to the methyltransferase superfamily. UbiG/COQ3 family.</text>
</comment>
<accession>A1URT5</accession>
<keyword id="KW-0489">Methyltransferase</keyword>
<keyword id="KW-0949">S-adenosyl-L-methionine</keyword>
<keyword id="KW-0808">Transferase</keyword>
<keyword id="KW-0831">Ubiquinone biosynthesis</keyword>
<dbReference type="EC" id="2.1.1.222" evidence="1"/>
<dbReference type="EC" id="2.1.1.64" evidence="1"/>
<dbReference type="EMBL" id="CP000524">
    <property type="protein sequence ID" value="ABM45687.1"/>
    <property type="molecule type" value="Genomic_DNA"/>
</dbReference>
<dbReference type="RefSeq" id="WP_005766349.1">
    <property type="nucleotide sequence ID" value="NC_008783.1"/>
</dbReference>
<dbReference type="SMR" id="A1URT5"/>
<dbReference type="STRING" id="360095.BARBAKC583_0369"/>
<dbReference type="GeneID" id="4683879"/>
<dbReference type="KEGG" id="bbk:BARBAKC583_0369"/>
<dbReference type="PATRIC" id="fig|360095.6.peg.352"/>
<dbReference type="eggNOG" id="COG2227">
    <property type="taxonomic scope" value="Bacteria"/>
</dbReference>
<dbReference type="HOGENOM" id="CLU_042432_0_0_5"/>
<dbReference type="OrthoDB" id="9801538at2"/>
<dbReference type="UniPathway" id="UPA00232"/>
<dbReference type="Proteomes" id="UP000000643">
    <property type="component" value="Chromosome"/>
</dbReference>
<dbReference type="GO" id="GO:0102208">
    <property type="term" value="F:2-polyprenyl-6-hydroxyphenol methylase activity"/>
    <property type="evidence" value="ECO:0007669"/>
    <property type="project" value="UniProtKB-EC"/>
</dbReference>
<dbReference type="GO" id="GO:0061542">
    <property type="term" value="F:3-demethylubiquinol 3-O-methyltransferase activity"/>
    <property type="evidence" value="ECO:0007669"/>
    <property type="project" value="UniProtKB-UniRule"/>
</dbReference>
<dbReference type="GO" id="GO:0010420">
    <property type="term" value="F:polyprenyldihydroxybenzoate methyltransferase activity"/>
    <property type="evidence" value="ECO:0007669"/>
    <property type="project" value="InterPro"/>
</dbReference>
<dbReference type="GO" id="GO:0032259">
    <property type="term" value="P:methylation"/>
    <property type="evidence" value="ECO:0007669"/>
    <property type="project" value="UniProtKB-KW"/>
</dbReference>
<dbReference type="CDD" id="cd02440">
    <property type="entry name" value="AdoMet_MTases"/>
    <property type="match status" value="1"/>
</dbReference>
<dbReference type="Gene3D" id="3.40.50.150">
    <property type="entry name" value="Vaccinia Virus protein VP39"/>
    <property type="match status" value="1"/>
</dbReference>
<dbReference type="HAMAP" id="MF_00472">
    <property type="entry name" value="UbiG"/>
    <property type="match status" value="1"/>
</dbReference>
<dbReference type="InterPro" id="IPR029063">
    <property type="entry name" value="SAM-dependent_MTases_sf"/>
</dbReference>
<dbReference type="InterPro" id="IPR010233">
    <property type="entry name" value="UbiG_MeTrfase"/>
</dbReference>
<dbReference type="NCBIfam" id="TIGR01983">
    <property type="entry name" value="UbiG"/>
    <property type="match status" value="1"/>
</dbReference>
<dbReference type="PANTHER" id="PTHR43464">
    <property type="entry name" value="METHYLTRANSFERASE"/>
    <property type="match status" value="1"/>
</dbReference>
<dbReference type="PANTHER" id="PTHR43464:SF19">
    <property type="entry name" value="UBIQUINONE BIOSYNTHESIS O-METHYLTRANSFERASE, MITOCHONDRIAL"/>
    <property type="match status" value="1"/>
</dbReference>
<dbReference type="Pfam" id="PF13489">
    <property type="entry name" value="Methyltransf_23"/>
    <property type="match status" value="1"/>
</dbReference>
<dbReference type="SUPFAM" id="SSF53335">
    <property type="entry name" value="S-adenosyl-L-methionine-dependent methyltransferases"/>
    <property type="match status" value="1"/>
</dbReference>
<protein>
    <recommendedName>
        <fullName evidence="1">Ubiquinone biosynthesis O-methyltransferase</fullName>
    </recommendedName>
    <alternativeName>
        <fullName evidence="1">2-polyprenyl-6-hydroxyphenol methylase</fullName>
        <ecNumber evidence="1">2.1.1.222</ecNumber>
    </alternativeName>
    <alternativeName>
        <fullName evidence="1">3-demethylubiquinone 3-O-methyltransferase</fullName>
        <ecNumber evidence="1">2.1.1.64</ecNumber>
    </alternativeName>
</protein>
<organism>
    <name type="scientific">Bartonella bacilliformis (strain ATCC 35685 / KC583 / Herrer 020/F12,63)</name>
    <dbReference type="NCBI Taxonomy" id="360095"/>
    <lineage>
        <taxon>Bacteria</taxon>
        <taxon>Pseudomonadati</taxon>
        <taxon>Pseudomonadota</taxon>
        <taxon>Alphaproteobacteria</taxon>
        <taxon>Hyphomicrobiales</taxon>
        <taxon>Bartonellaceae</taxon>
        <taxon>Bartonella</taxon>
    </lineage>
</organism>
<proteinExistence type="inferred from homology"/>
<evidence type="ECO:0000255" key="1">
    <source>
        <dbReference type="HAMAP-Rule" id="MF_00472"/>
    </source>
</evidence>
<reference key="1">
    <citation type="submission" date="2006-12" db="EMBL/GenBank/DDBJ databases">
        <authorList>
            <person name="Hendrix L."/>
            <person name="Mohamoud Y."/>
            <person name="Radune D."/>
            <person name="Shvartsbeyn A."/>
            <person name="Daugherty S."/>
            <person name="Dodson R."/>
            <person name="Durkin A.S."/>
            <person name="Harkins D."/>
            <person name="Huot H."/>
            <person name="Kothari S.P."/>
            <person name="Madupu R."/>
            <person name="Li J."/>
            <person name="Nelson W.C."/>
            <person name="Shrivastava S."/>
            <person name="Giglio M.G."/>
            <person name="Haft D."/>
            <person name="Selengut J."/>
            <person name="Fraser-Ligget C."/>
            <person name="Seshadri R."/>
        </authorList>
    </citation>
    <scope>NUCLEOTIDE SEQUENCE [LARGE SCALE GENOMIC DNA]</scope>
    <source>
        <strain>ATCC 35685 / KC583 / Herrer 020/F12,63</strain>
    </source>
</reference>
<feature type="chain" id="PRO_1000013890" description="Ubiquinone biosynthesis O-methyltransferase">
    <location>
        <begin position="1"/>
        <end position="248"/>
    </location>
</feature>
<feature type="binding site" evidence="1">
    <location>
        <position position="41"/>
    </location>
    <ligand>
        <name>S-adenosyl-L-methionine</name>
        <dbReference type="ChEBI" id="CHEBI:59789"/>
    </ligand>
</feature>
<feature type="binding site" evidence="1">
    <location>
        <position position="72"/>
    </location>
    <ligand>
        <name>S-adenosyl-L-methionine</name>
        <dbReference type="ChEBI" id="CHEBI:59789"/>
    </ligand>
</feature>
<feature type="binding site" evidence="1">
    <location>
        <position position="93"/>
    </location>
    <ligand>
        <name>S-adenosyl-L-methionine</name>
        <dbReference type="ChEBI" id="CHEBI:59789"/>
    </ligand>
</feature>
<feature type="binding site" evidence="1">
    <location>
        <position position="136"/>
    </location>
    <ligand>
        <name>S-adenosyl-L-methionine</name>
        <dbReference type="ChEBI" id="CHEBI:59789"/>
    </ligand>
</feature>
<gene>
    <name evidence="1" type="primary">ubiG</name>
    <name type="ordered locus">BARBAKC583_0369</name>
</gene>
<sequence length="248" mass="28049">MINKTRTTVDQSEIDHFSRIAAEWWNPQGKFRPLHKFNPTRLAYIKEKICLAFDRDPFSLAPFAGLKILDIGCGGGLLCEPMVRLGATVIGADAAQNNIEVAKIHATQSGLSIDYRATTAEKLADKGEKFDIILNMEIVEHVADVDLFISATAKMLKPQGLMFIATLNRTWKSWGLAIVGAEYILRWLPKGTHDYKKFLKPQELKKLLLTNSLKVIDELGITYNPLNDSWNRSKDMDVNYMLLVKRLQ</sequence>
<name>UBIG_BARBK</name>